<sequence length="412" mass="45520">MEKQKLSVKNSITDYIEWLAQYGASADGGVTRLLYTKEWMDAQLAVKTEMSSFGLETRFDDVGNVFGRLSGTQSPDEVIVTGSHIDTVINGGKYDGAYGVLAAMLALKQLKETYGAPKKTLEAVSLCEEEGSRFPMTYWGSGNMTGVFSEQDAKEPRDESGVSLQTAMHESGFGKGVFQSAYRTDISAFVELHIEQGKTLEMSGRDLGIVTSIAGQRRYLVTLEGECNHAGTTSMKWRKDPLAASSRIIHELLLRSDELPDELRLTCGKITAEPNVANVIPGRVQFSIDIRHQHQHVLEQFHQDMVALINGICLQKGIRAVIDEYMRIEPVPMDERLKAAAFETALENGFSCEEMVSGAGHDAQMIGRRYPACMLFVPSRGGVSHSPKEYTSARQLEIGVRALTDLLYKLAY</sequence>
<accession>O32149</accession>
<protein>
    <recommendedName>
        <fullName evidence="3">Allantoate amidohydrolase</fullName>
        <shortName evidence="1">AAH</shortName>
        <ecNumber evidence="1">3.5.3.9</ecNumber>
    </recommendedName>
    <alternativeName>
        <fullName evidence="1">Allantoate deiminase</fullName>
    </alternativeName>
</protein>
<reference key="1">
    <citation type="journal article" date="1997" name="Nature">
        <title>The complete genome sequence of the Gram-positive bacterium Bacillus subtilis.</title>
        <authorList>
            <person name="Kunst F."/>
            <person name="Ogasawara N."/>
            <person name="Moszer I."/>
            <person name="Albertini A.M."/>
            <person name="Alloni G."/>
            <person name="Azevedo V."/>
            <person name="Bertero M.G."/>
            <person name="Bessieres P."/>
            <person name="Bolotin A."/>
            <person name="Borchert S."/>
            <person name="Borriss R."/>
            <person name="Boursier L."/>
            <person name="Brans A."/>
            <person name="Braun M."/>
            <person name="Brignell S.C."/>
            <person name="Bron S."/>
            <person name="Brouillet S."/>
            <person name="Bruschi C.V."/>
            <person name="Caldwell B."/>
            <person name="Capuano V."/>
            <person name="Carter N.M."/>
            <person name="Choi S.-K."/>
            <person name="Codani J.-J."/>
            <person name="Connerton I.F."/>
            <person name="Cummings N.J."/>
            <person name="Daniel R.A."/>
            <person name="Denizot F."/>
            <person name="Devine K.M."/>
            <person name="Duesterhoeft A."/>
            <person name="Ehrlich S.D."/>
            <person name="Emmerson P.T."/>
            <person name="Entian K.-D."/>
            <person name="Errington J."/>
            <person name="Fabret C."/>
            <person name="Ferrari E."/>
            <person name="Foulger D."/>
            <person name="Fritz C."/>
            <person name="Fujita M."/>
            <person name="Fujita Y."/>
            <person name="Fuma S."/>
            <person name="Galizzi A."/>
            <person name="Galleron N."/>
            <person name="Ghim S.-Y."/>
            <person name="Glaser P."/>
            <person name="Goffeau A."/>
            <person name="Golightly E.J."/>
            <person name="Grandi G."/>
            <person name="Guiseppi G."/>
            <person name="Guy B.J."/>
            <person name="Haga K."/>
            <person name="Haiech J."/>
            <person name="Harwood C.R."/>
            <person name="Henaut A."/>
            <person name="Hilbert H."/>
            <person name="Holsappel S."/>
            <person name="Hosono S."/>
            <person name="Hullo M.-F."/>
            <person name="Itaya M."/>
            <person name="Jones L.-M."/>
            <person name="Joris B."/>
            <person name="Karamata D."/>
            <person name="Kasahara Y."/>
            <person name="Klaerr-Blanchard M."/>
            <person name="Klein C."/>
            <person name="Kobayashi Y."/>
            <person name="Koetter P."/>
            <person name="Koningstein G."/>
            <person name="Krogh S."/>
            <person name="Kumano M."/>
            <person name="Kurita K."/>
            <person name="Lapidus A."/>
            <person name="Lardinois S."/>
            <person name="Lauber J."/>
            <person name="Lazarevic V."/>
            <person name="Lee S.-M."/>
            <person name="Levine A."/>
            <person name="Liu H."/>
            <person name="Masuda S."/>
            <person name="Mauel C."/>
            <person name="Medigue C."/>
            <person name="Medina N."/>
            <person name="Mellado R.P."/>
            <person name="Mizuno M."/>
            <person name="Moestl D."/>
            <person name="Nakai S."/>
            <person name="Noback M."/>
            <person name="Noone D."/>
            <person name="O'Reilly M."/>
            <person name="Ogawa K."/>
            <person name="Ogiwara A."/>
            <person name="Oudega B."/>
            <person name="Park S.-H."/>
            <person name="Parro V."/>
            <person name="Pohl T.M."/>
            <person name="Portetelle D."/>
            <person name="Porwollik S."/>
            <person name="Prescott A.M."/>
            <person name="Presecan E."/>
            <person name="Pujic P."/>
            <person name="Purnelle B."/>
            <person name="Rapoport G."/>
            <person name="Rey M."/>
            <person name="Reynolds S."/>
            <person name="Rieger M."/>
            <person name="Rivolta C."/>
            <person name="Rocha E."/>
            <person name="Roche B."/>
            <person name="Rose M."/>
            <person name="Sadaie Y."/>
            <person name="Sato T."/>
            <person name="Scanlan E."/>
            <person name="Schleich S."/>
            <person name="Schroeter R."/>
            <person name="Scoffone F."/>
            <person name="Sekiguchi J."/>
            <person name="Sekowska A."/>
            <person name="Seror S.J."/>
            <person name="Serror P."/>
            <person name="Shin B.-S."/>
            <person name="Soldo B."/>
            <person name="Sorokin A."/>
            <person name="Tacconi E."/>
            <person name="Takagi T."/>
            <person name="Takahashi H."/>
            <person name="Takemaru K."/>
            <person name="Takeuchi M."/>
            <person name="Tamakoshi A."/>
            <person name="Tanaka T."/>
            <person name="Terpstra P."/>
            <person name="Tognoni A."/>
            <person name="Tosato V."/>
            <person name="Uchiyama S."/>
            <person name="Vandenbol M."/>
            <person name="Vannier F."/>
            <person name="Vassarotti A."/>
            <person name="Viari A."/>
            <person name="Wambutt R."/>
            <person name="Wedler E."/>
            <person name="Wedler H."/>
            <person name="Weitzenegger T."/>
            <person name="Winters P."/>
            <person name="Wipat A."/>
            <person name="Yamamoto H."/>
            <person name="Yamane K."/>
            <person name="Yasumoto K."/>
            <person name="Yata K."/>
            <person name="Yoshida K."/>
            <person name="Yoshikawa H.-F."/>
            <person name="Zumstein E."/>
            <person name="Yoshikawa H."/>
            <person name="Danchin A."/>
        </authorList>
    </citation>
    <scope>NUCLEOTIDE SEQUENCE [LARGE SCALE GENOMIC DNA]</scope>
    <source>
        <strain>168</strain>
    </source>
</reference>
<reference key="2">
    <citation type="journal article" date="2001" name="J. Bacteriol.">
        <title>Functional analysis of 14 genes that constitute the purine catabolic pathway in Bacillus subtilis and evidence for a novel regulon controlled by the PucR transcription activator.</title>
        <authorList>
            <person name="Schultz A.C."/>
            <person name="Nygaard P."/>
            <person name="Saxild H.H."/>
        </authorList>
    </citation>
    <scope>FUNCTION</scope>
    <scope>INDUCTION</scope>
    <scope>PATHWAY</scope>
    <source>
        <strain>168</strain>
    </source>
</reference>
<comment type="function">
    <text evidence="1 2">Involved in the anaerobic nitrogen utilization via the assimilation of allantoin (PubMed:11344136). Catalyzes specifically the hydrolysis of allantoate to yield CO2, NH3 and S-ureidoglycine, which is unstable and readily undergoes a second deamination by S-ureidoglycine aminohydrolase AllE to yield S-ureidoglycolate and NH3 (By similarity).</text>
</comment>
<comment type="catalytic activity">
    <reaction evidence="1">
        <text>allantoate + H2O + 2 H(+) = (S)-2-ureidoglycine + NH4(+) + CO2</text>
        <dbReference type="Rhea" id="RHEA:27485"/>
        <dbReference type="ChEBI" id="CHEBI:15377"/>
        <dbReference type="ChEBI" id="CHEBI:15378"/>
        <dbReference type="ChEBI" id="CHEBI:16526"/>
        <dbReference type="ChEBI" id="CHEBI:17536"/>
        <dbReference type="ChEBI" id="CHEBI:28938"/>
        <dbReference type="ChEBI" id="CHEBI:59947"/>
        <dbReference type="EC" id="3.5.3.9"/>
    </reaction>
</comment>
<comment type="cofactor">
    <cofactor evidence="1">
        <name>Zn(2+)</name>
        <dbReference type="ChEBI" id="CHEBI:29105"/>
    </cofactor>
    <text evidence="1">Binds 2 Zn(2+) ions per subunit.</text>
</comment>
<comment type="pathway">
    <text evidence="5">Nitrogen metabolism; (S)-allantoin degradation.</text>
</comment>
<comment type="subunit">
    <text evidence="1">Homodimer.</text>
</comment>
<comment type="subcellular location">
    <subcellularLocation>
        <location evidence="1">Cytoplasm</location>
    </subcellularLocation>
</comment>
<comment type="induction">
    <text evidence="2">Transcriptionally regulated by PucR. Expression is very low in excess nitrogen (glutamate plus ammonia) and is induced during limiting-nitrogen conditions (glutamate). Expression is further induced when allantoin is added during limiting-nitrogen conditions.</text>
</comment>
<comment type="similarity">
    <text evidence="4">Belongs to the peptidase M20 family.</text>
</comment>
<proteinExistence type="evidence at transcript level"/>
<dbReference type="EC" id="3.5.3.9" evidence="1"/>
<dbReference type="EMBL" id="AL009126">
    <property type="protein sequence ID" value="CAB15243.1"/>
    <property type="molecule type" value="Genomic_DNA"/>
</dbReference>
<dbReference type="PIR" id="G70017">
    <property type="entry name" value="G70017"/>
</dbReference>
<dbReference type="RefSeq" id="NP_391133.1">
    <property type="nucleotide sequence ID" value="NC_000964.3"/>
</dbReference>
<dbReference type="SMR" id="O32149"/>
<dbReference type="FunCoup" id="O32149">
    <property type="interactions" value="224"/>
</dbReference>
<dbReference type="STRING" id="224308.BSU32530"/>
<dbReference type="PaxDb" id="224308-BSU32530"/>
<dbReference type="DNASU" id="936699"/>
<dbReference type="EnsemblBacteria" id="CAB15243">
    <property type="protein sequence ID" value="CAB15243"/>
    <property type="gene ID" value="BSU_32530"/>
</dbReference>
<dbReference type="GeneID" id="936699"/>
<dbReference type="KEGG" id="bsu:BSU32530"/>
<dbReference type="PATRIC" id="fig|224308.179.peg.3522"/>
<dbReference type="eggNOG" id="COG0624">
    <property type="taxonomic scope" value="Bacteria"/>
</dbReference>
<dbReference type="InParanoid" id="O32149"/>
<dbReference type="OrthoDB" id="9808195at2"/>
<dbReference type="PhylomeDB" id="O32149"/>
<dbReference type="BioCyc" id="BSUB:BSU32530-MONOMER"/>
<dbReference type="UniPathway" id="UPA00395"/>
<dbReference type="Proteomes" id="UP000001570">
    <property type="component" value="Chromosome"/>
</dbReference>
<dbReference type="GO" id="GO:0005737">
    <property type="term" value="C:cytoplasm"/>
    <property type="evidence" value="ECO:0007669"/>
    <property type="project" value="UniProtKB-SubCell"/>
</dbReference>
<dbReference type="GO" id="GO:0047652">
    <property type="term" value="F:allantoate deiminase activity"/>
    <property type="evidence" value="ECO:0000250"/>
    <property type="project" value="UniProtKB"/>
</dbReference>
<dbReference type="GO" id="GO:0008270">
    <property type="term" value="F:zinc ion binding"/>
    <property type="evidence" value="ECO:0000250"/>
    <property type="project" value="UniProtKB"/>
</dbReference>
<dbReference type="GO" id="GO:0000256">
    <property type="term" value="P:allantoin catabolic process"/>
    <property type="evidence" value="ECO:0000314"/>
    <property type="project" value="UniProtKB"/>
</dbReference>
<dbReference type="GO" id="GO:0006144">
    <property type="term" value="P:purine nucleobase metabolic process"/>
    <property type="evidence" value="ECO:0007669"/>
    <property type="project" value="UniProtKB-KW"/>
</dbReference>
<dbReference type="CDD" id="cd03884">
    <property type="entry name" value="M20_bAS"/>
    <property type="match status" value="1"/>
</dbReference>
<dbReference type="Gene3D" id="3.30.70.360">
    <property type="match status" value="1"/>
</dbReference>
<dbReference type="Gene3D" id="3.40.630.10">
    <property type="entry name" value="Zn peptidases"/>
    <property type="match status" value="1"/>
</dbReference>
<dbReference type="InterPro" id="IPR010158">
    <property type="entry name" value="Amidase_Cbmase"/>
</dbReference>
<dbReference type="InterPro" id="IPR036264">
    <property type="entry name" value="Bact_exopeptidase_dim_dom"/>
</dbReference>
<dbReference type="InterPro" id="IPR002933">
    <property type="entry name" value="Peptidase_M20"/>
</dbReference>
<dbReference type="NCBIfam" id="TIGR01879">
    <property type="entry name" value="hydantase"/>
    <property type="match status" value="1"/>
</dbReference>
<dbReference type="NCBIfam" id="NF006768">
    <property type="entry name" value="PRK09290.1-1"/>
    <property type="match status" value="1"/>
</dbReference>
<dbReference type="NCBIfam" id="NF006771">
    <property type="entry name" value="PRK09290.1-5"/>
    <property type="match status" value="1"/>
</dbReference>
<dbReference type="PANTHER" id="PTHR32494:SF5">
    <property type="entry name" value="ALLANTOATE AMIDOHYDROLASE"/>
    <property type="match status" value="1"/>
</dbReference>
<dbReference type="PANTHER" id="PTHR32494">
    <property type="entry name" value="ALLANTOATE DEIMINASE-RELATED"/>
    <property type="match status" value="1"/>
</dbReference>
<dbReference type="Pfam" id="PF01546">
    <property type="entry name" value="Peptidase_M20"/>
    <property type="match status" value="1"/>
</dbReference>
<dbReference type="PIRSF" id="PIRSF001235">
    <property type="entry name" value="Amidase_carbamoylase"/>
    <property type="match status" value="1"/>
</dbReference>
<dbReference type="SUPFAM" id="SSF55031">
    <property type="entry name" value="Bacterial exopeptidase dimerisation domain"/>
    <property type="match status" value="1"/>
</dbReference>
<dbReference type="SUPFAM" id="SSF53187">
    <property type="entry name" value="Zn-dependent exopeptidases"/>
    <property type="match status" value="1"/>
</dbReference>
<gene>
    <name evidence="3" type="primary">pucF</name>
    <name type="synonym">yurH</name>
    <name type="ordered locus">BSU32530</name>
</gene>
<keyword id="KW-0963">Cytoplasm</keyword>
<keyword id="KW-0378">Hydrolase</keyword>
<keyword id="KW-0479">Metal-binding</keyword>
<keyword id="KW-0659">Purine metabolism</keyword>
<keyword id="KW-1185">Reference proteome</keyword>
<keyword id="KW-0862">Zinc</keyword>
<name>ALLC_BACSU</name>
<evidence type="ECO:0000250" key="1">
    <source>
        <dbReference type="UniProtKB" id="P77425"/>
    </source>
</evidence>
<evidence type="ECO:0000269" key="2">
    <source>
    </source>
</evidence>
<evidence type="ECO:0000303" key="3">
    <source>
    </source>
</evidence>
<evidence type="ECO:0000305" key="4"/>
<evidence type="ECO:0000305" key="5">
    <source>
    </source>
</evidence>
<feature type="chain" id="PRO_0000061956" description="Allantoate amidohydrolase">
    <location>
        <begin position="1"/>
        <end position="412"/>
    </location>
</feature>
<feature type="binding site" evidence="1">
    <location>
        <position position="84"/>
    </location>
    <ligand>
        <name>Zn(2+)</name>
        <dbReference type="ChEBI" id="CHEBI:29105"/>
        <label>1</label>
    </ligand>
</feature>
<feature type="binding site" evidence="1">
    <location>
        <position position="95"/>
    </location>
    <ligand>
        <name>Zn(2+)</name>
        <dbReference type="ChEBI" id="CHEBI:29105"/>
        <label>1</label>
    </ligand>
</feature>
<feature type="binding site" evidence="1">
    <location>
        <position position="95"/>
    </location>
    <ligand>
        <name>Zn(2+)</name>
        <dbReference type="ChEBI" id="CHEBI:29105"/>
        <label>2</label>
    </ligand>
</feature>
<feature type="binding site" evidence="1">
    <location>
        <position position="130"/>
    </location>
    <ligand>
        <name>Zn(2+)</name>
        <dbReference type="ChEBI" id="CHEBI:29105"/>
        <label>2</label>
    </ligand>
</feature>
<feature type="binding site" evidence="1">
    <location>
        <position position="193"/>
    </location>
    <ligand>
        <name>Zn(2+)</name>
        <dbReference type="ChEBI" id="CHEBI:29105"/>
        <label>1</label>
    </ligand>
</feature>
<feature type="binding site" evidence="1">
    <location>
        <position position="218"/>
    </location>
    <ligand>
        <name>allantoate</name>
        <dbReference type="ChEBI" id="CHEBI:17536"/>
    </ligand>
</feature>
<feature type="binding site" evidence="1">
    <location>
        <position position="278"/>
    </location>
    <ligand>
        <name>allantoate</name>
        <dbReference type="ChEBI" id="CHEBI:17536"/>
    </ligand>
</feature>
<feature type="binding site" evidence="1">
    <location>
        <position position="291"/>
    </location>
    <ligand>
        <name>allantoate</name>
        <dbReference type="ChEBI" id="CHEBI:17536"/>
    </ligand>
</feature>
<feature type="binding site" evidence="1">
    <location>
        <position position="385"/>
    </location>
    <ligand>
        <name>Zn(2+)</name>
        <dbReference type="ChEBI" id="CHEBI:29105"/>
        <label>2</label>
    </ligand>
</feature>
<organism>
    <name type="scientific">Bacillus subtilis (strain 168)</name>
    <dbReference type="NCBI Taxonomy" id="224308"/>
    <lineage>
        <taxon>Bacteria</taxon>
        <taxon>Bacillati</taxon>
        <taxon>Bacillota</taxon>
        <taxon>Bacilli</taxon>
        <taxon>Bacillales</taxon>
        <taxon>Bacillaceae</taxon>
        <taxon>Bacillus</taxon>
    </lineage>
</organism>